<accession>Q661E3</accession>
<sequence length="206" mass="22154">MLGLIGKKVGMTQIFQKNGIVIPVTVIEFQPNYIIGKKTVDRDGYSALIAGSVDLKGSKVSKPIKGQYKSLKDIEPKKYVIELKGLDGYDAGDEIKVDVFKSVKYVDVTGTTKGKGFQGAMKRHNFSGGPSSHGSKFHRHLGGTGQATTPARTFKGTKMAGRMGGNKQTIQNLEVVLIDEENRAILVKGAVPGAKGSFVVVKKSKK</sequence>
<name>RL3_BORGP</name>
<protein>
    <recommendedName>
        <fullName evidence="1">Large ribosomal subunit protein uL3</fullName>
    </recommendedName>
    <alternativeName>
        <fullName evidence="3">50S ribosomal protein L3</fullName>
    </alternativeName>
</protein>
<feature type="chain" id="PRO_0000241322" description="Large ribosomal subunit protein uL3">
    <location>
        <begin position="1"/>
        <end position="206"/>
    </location>
</feature>
<feature type="region of interest" description="Disordered" evidence="2">
    <location>
        <begin position="127"/>
        <end position="151"/>
    </location>
</feature>
<keyword id="KW-0687">Ribonucleoprotein</keyword>
<keyword id="KW-0689">Ribosomal protein</keyword>
<keyword id="KW-0694">RNA-binding</keyword>
<keyword id="KW-0699">rRNA-binding</keyword>
<organism>
    <name type="scientific">Borrelia garinii subsp. bavariensis (strain ATCC BAA-2496 / DSM 23469 / PBi)</name>
    <name type="common">Borreliella bavariensis</name>
    <dbReference type="NCBI Taxonomy" id="290434"/>
    <lineage>
        <taxon>Bacteria</taxon>
        <taxon>Pseudomonadati</taxon>
        <taxon>Spirochaetota</taxon>
        <taxon>Spirochaetia</taxon>
        <taxon>Spirochaetales</taxon>
        <taxon>Borreliaceae</taxon>
        <taxon>Borreliella</taxon>
    </lineage>
</organism>
<gene>
    <name evidence="1" type="primary">rplC</name>
    <name type="ordered locus">BG0489</name>
</gene>
<dbReference type="EMBL" id="CP000013">
    <property type="protein sequence ID" value="AAU07328.1"/>
    <property type="molecule type" value="Genomic_DNA"/>
</dbReference>
<dbReference type="RefSeq" id="WP_011193797.1">
    <property type="nucleotide sequence ID" value="NZ_CP028872.1"/>
</dbReference>
<dbReference type="SMR" id="Q661E3"/>
<dbReference type="GeneID" id="45161273"/>
<dbReference type="KEGG" id="bga:BG0489"/>
<dbReference type="eggNOG" id="COG0087">
    <property type="taxonomic scope" value="Bacteria"/>
</dbReference>
<dbReference type="HOGENOM" id="CLU_044142_4_1_12"/>
<dbReference type="OrthoDB" id="9806135at2"/>
<dbReference type="Proteomes" id="UP000002276">
    <property type="component" value="Chromosome"/>
</dbReference>
<dbReference type="GO" id="GO:0022625">
    <property type="term" value="C:cytosolic large ribosomal subunit"/>
    <property type="evidence" value="ECO:0007669"/>
    <property type="project" value="TreeGrafter"/>
</dbReference>
<dbReference type="GO" id="GO:0019843">
    <property type="term" value="F:rRNA binding"/>
    <property type="evidence" value="ECO:0007669"/>
    <property type="project" value="UniProtKB-UniRule"/>
</dbReference>
<dbReference type="GO" id="GO:0003735">
    <property type="term" value="F:structural constituent of ribosome"/>
    <property type="evidence" value="ECO:0007669"/>
    <property type="project" value="InterPro"/>
</dbReference>
<dbReference type="GO" id="GO:0006412">
    <property type="term" value="P:translation"/>
    <property type="evidence" value="ECO:0007669"/>
    <property type="project" value="UniProtKB-UniRule"/>
</dbReference>
<dbReference type="FunFam" id="2.40.30.10:FF:000004">
    <property type="entry name" value="50S ribosomal protein L3"/>
    <property type="match status" value="1"/>
</dbReference>
<dbReference type="Gene3D" id="2.40.30.10">
    <property type="entry name" value="Translation factors"/>
    <property type="match status" value="2"/>
</dbReference>
<dbReference type="HAMAP" id="MF_01325_B">
    <property type="entry name" value="Ribosomal_uL3_B"/>
    <property type="match status" value="1"/>
</dbReference>
<dbReference type="InterPro" id="IPR000597">
    <property type="entry name" value="Ribosomal_uL3"/>
</dbReference>
<dbReference type="InterPro" id="IPR019927">
    <property type="entry name" value="Ribosomal_uL3_bac/org-type"/>
</dbReference>
<dbReference type="InterPro" id="IPR019926">
    <property type="entry name" value="Ribosomal_uL3_CS"/>
</dbReference>
<dbReference type="InterPro" id="IPR009000">
    <property type="entry name" value="Transl_B-barrel_sf"/>
</dbReference>
<dbReference type="NCBIfam" id="TIGR03625">
    <property type="entry name" value="L3_bact"/>
    <property type="match status" value="1"/>
</dbReference>
<dbReference type="PANTHER" id="PTHR11229">
    <property type="entry name" value="50S RIBOSOMAL PROTEIN L3"/>
    <property type="match status" value="1"/>
</dbReference>
<dbReference type="PANTHER" id="PTHR11229:SF16">
    <property type="entry name" value="LARGE RIBOSOMAL SUBUNIT PROTEIN UL3C"/>
    <property type="match status" value="1"/>
</dbReference>
<dbReference type="Pfam" id="PF00297">
    <property type="entry name" value="Ribosomal_L3"/>
    <property type="match status" value="1"/>
</dbReference>
<dbReference type="SUPFAM" id="SSF50447">
    <property type="entry name" value="Translation proteins"/>
    <property type="match status" value="1"/>
</dbReference>
<dbReference type="PROSITE" id="PS00474">
    <property type="entry name" value="RIBOSOMAL_L3"/>
    <property type="match status" value="1"/>
</dbReference>
<evidence type="ECO:0000255" key="1">
    <source>
        <dbReference type="HAMAP-Rule" id="MF_01325"/>
    </source>
</evidence>
<evidence type="ECO:0000256" key="2">
    <source>
        <dbReference type="SAM" id="MobiDB-lite"/>
    </source>
</evidence>
<evidence type="ECO:0000305" key="3"/>
<reference key="1">
    <citation type="journal article" date="2004" name="Nucleic Acids Res.">
        <title>Comparative analysis of the Borrelia garinii genome.</title>
        <authorList>
            <person name="Gloeckner G."/>
            <person name="Lehmann R."/>
            <person name="Romualdi A."/>
            <person name="Pradella S."/>
            <person name="Schulte-Spechtel U."/>
            <person name="Schilhabel M."/>
            <person name="Wilske B."/>
            <person name="Suehnel J."/>
            <person name="Platzer M."/>
        </authorList>
    </citation>
    <scope>NUCLEOTIDE SEQUENCE [LARGE SCALE GENOMIC DNA]</scope>
    <source>
        <strain>ATCC BAA-2496 / DSM 23469 / PBi</strain>
    </source>
</reference>
<comment type="function">
    <text evidence="1">One of the primary rRNA binding proteins, it binds directly near the 3'-end of the 23S rRNA, where it nucleates assembly of the 50S subunit.</text>
</comment>
<comment type="subunit">
    <text evidence="1">Part of the 50S ribosomal subunit. Forms a cluster with proteins L14 and L19.</text>
</comment>
<comment type="similarity">
    <text evidence="1">Belongs to the universal ribosomal protein uL3 family.</text>
</comment>
<proteinExistence type="inferred from homology"/>